<gene>
    <name type="ordered locus">MJ1535</name>
</gene>
<dbReference type="EMBL" id="L77117">
    <property type="protein sequence ID" value="AAB99558.1"/>
    <property type="molecule type" value="Genomic_DNA"/>
</dbReference>
<dbReference type="PIR" id="F64491">
    <property type="entry name" value="F64491"/>
</dbReference>
<dbReference type="RefSeq" id="WP_010871059.1">
    <property type="nucleotide sequence ID" value="NC_000909.1"/>
</dbReference>
<dbReference type="SMR" id="Q58930"/>
<dbReference type="PaxDb" id="243232-MJ_1535"/>
<dbReference type="EnsemblBacteria" id="AAB99558">
    <property type="protein sequence ID" value="AAB99558"/>
    <property type="gene ID" value="MJ_1535"/>
</dbReference>
<dbReference type="GeneID" id="1452443"/>
<dbReference type="KEGG" id="mja:MJ_1535"/>
<dbReference type="eggNOG" id="arCOG05088">
    <property type="taxonomic scope" value="Archaea"/>
</dbReference>
<dbReference type="HOGENOM" id="CLU_982151_0_0_2"/>
<dbReference type="InParanoid" id="Q58930"/>
<dbReference type="OrthoDB" id="65833at2157"/>
<dbReference type="Proteomes" id="UP000000805">
    <property type="component" value="Chromosome"/>
</dbReference>
<dbReference type="GO" id="GO:0016020">
    <property type="term" value="C:membrane"/>
    <property type="evidence" value="ECO:0007669"/>
    <property type="project" value="UniProtKB-SubCell"/>
</dbReference>
<dbReference type="PROSITE" id="PS51257">
    <property type="entry name" value="PROKAR_LIPOPROTEIN"/>
    <property type="match status" value="1"/>
</dbReference>
<organism>
    <name type="scientific">Methanocaldococcus jannaschii (strain ATCC 43067 / DSM 2661 / JAL-1 / JCM 10045 / NBRC 100440)</name>
    <name type="common">Methanococcus jannaschii</name>
    <dbReference type="NCBI Taxonomy" id="243232"/>
    <lineage>
        <taxon>Archaea</taxon>
        <taxon>Methanobacteriati</taxon>
        <taxon>Methanobacteriota</taxon>
        <taxon>Methanomada group</taxon>
        <taxon>Methanococci</taxon>
        <taxon>Methanococcales</taxon>
        <taxon>Methanocaldococcaceae</taxon>
        <taxon>Methanocaldococcus</taxon>
    </lineage>
</organism>
<name>Y1535_METJA</name>
<keyword id="KW-0472">Membrane</keyword>
<keyword id="KW-1185">Reference proteome</keyword>
<keyword id="KW-0812">Transmembrane</keyword>
<keyword id="KW-1133">Transmembrane helix</keyword>
<reference key="1">
    <citation type="journal article" date="1996" name="Science">
        <title>Complete genome sequence of the methanogenic archaeon, Methanococcus jannaschii.</title>
        <authorList>
            <person name="Bult C.J."/>
            <person name="White O."/>
            <person name="Olsen G.J."/>
            <person name="Zhou L."/>
            <person name="Fleischmann R.D."/>
            <person name="Sutton G.G."/>
            <person name="Blake J.A."/>
            <person name="FitzGerald L.M."/>
            <person name="Clayton R.A."/>
            <person name="Gocayne J.D."/>
            <person name="Kerlavage A.R."/>
            <person name="Dougherty B.A."/>
            <person name="Tomb J.-F."/>
            <person name="Adams M.D."/>
            <person name="Reich C.I."/>
            <person name="Overbeek R."/>
            <person name="Kirkness E.F."/>
            <person name="Weinstock K.G."/>
            <person name="Merrick J.M."/>
            <person name="Glodek A."/>
            <person name="Scott J.L."/>
            <person name="Geoghagen N.S.M."/>
            <person name="Weidman J.F."/>
            <person name="Fuhrmann J.L."/>
            <person name="Nguyen D."/>
            <person name="Utterback T.R."/>
            <person name="Kelley J.M."/>
            <person name="Peterson J.D."/>
            <person name="Sadow P.W."/>
            <person name="Hanna M.C."/>
            <person name="Cotton M.D."/>
            <person name="Roberts K.M."/>
            <person name="Hurst M.A."/>
            <person name="Kaine B.P."/>
            <person name="Borodovsky M."/>
            <person name="Klenk H.-P."/>
            <person name="Fraser C.M."/>
            <person name="Smith H.O."/>
            <person name="Woese C.R."/>
            <person name="Venter J.C."/>
        </authorList>
    </citation>
    <scope>NUCLEOTIDE SEQUENCE [LARGE SCALE GENOMIC DNA]</scope>
    <source>
        <strain>ATCC 43067 / DSM 2661 / JAL-1 / JCM 10045 / NBRC 100440</strain>
    </source>
</reference>
<evidence type="ECO:0000255" key="1"/>
<evidence type="ECO:0000305" key="2"/>
<sequence>MKRLFFIFVMLIVLLCGCTSNKTTNVNNEININKIETNKTLENESLIQKTEKNQLAKIKEIKYMYIVKEGNKTKIQFALAYENGSLARVSNGKVVLKIFDDSGLLFNKTYYINELPLKAGYYYEIELPKIKGFYKNAKFVLTFKNDNVNLSKTTYGTIERYSEEEMKEIFEKEYHENSIKTNIEEFRDVVGIKFTVKEYGYYKIYNNQTDRIEKVFRVDFVAKNLNPDTYEFAPIGVCLISGDKKYWKIGGLDEIEIGINQEIAGYWIFNKPDSIENLRLDFKMGNIVYDIPLTQNNLK</sequence>
<feature type="chain" id="PRO_0000107394" description="Uncharacterized protein MJ1535">
    <location>
        <begin position="1"/>
        <end position="299"/>
    </location>
</feature>
<feature type="transmembrane region" description="Helical" evidence="1">
    <location>
        <begin position="4"/>
        <end position="20"/>
    </location>
</feature>
<accession>Q58930</accession>
<comment type="subcellular location">
    <subcellularLocation>
        <location evidence="2">Membrane</location>
        <topology evidence="2">Single-pass membrane protein</topology>
    </subcellularLocation>
</comment>
<proteinExistence type="predicted"/>
<protein>
    <recommendedName>
        <fullName>Uncharacterized protein MJ1535</fullName>
    </recommendedName>
</protein>